<keyword id="KW-0217">Developmental protein</keyword>
<keyword id="KW-1015">Disulfide bond</keyword>
<keyword id="KW-0272">Extracellular matrix</keyword>
<keyword id="KW-0325">Glycoprotein</keyword>
<keyword id="KW-0449">Lipoprotein</keyword>
<keyword id="KW-0964">Secreted</keyword>
<keyword id="KW-0879">Wnt signaling pathway</keyword>
<sequence>SGTCTIETCWMRLPTFRSVGEFLKDRFDGASRVALRNEGVRGNSNRGDRGDRRDRGDRSDNGGTEANFQPYNSNHKPPGPRDLVYFDDSPDFCVRNERAGTLGTVGRECNNTSLGVDGCDLMCCGRDYDGSEVRIKERCSCTF</sequence>
<accession>P28089</accession>
<dbReference type="EMBL" id="M91272">
    <property type="protein sequence ID" value="AAA29130.1"/>
    <property type="molecule type" value="Genomic_DNA"/>
</dbReference>
<dbReference type="SMR" id="P28089"/>
<dbReference type="GlyCosmos" id="P28089">
    <property type="glycosylation" value="2 sites, No reported glycans"/>
</dbReference>
<dbReference type="GO" id="GO:0005615">
    <property type="term" value="C:extracellular space"/>
    <property type="evidence" value="ECO:0007669"/>
    <property type="project" value="TreeGrafter"/>
</dbReference>
<dbReference type="GO" id="GO:0005125">
    <property type="term" value="F:cytokine activity"/>
    <property type="evidence" value="ECO:0007669"/>
    <property type="project" value="TreeGrafter"/>
</dbReference>
<dbReference type="GO" id="GO:0005109">
    <property type="term" value="F:frizzled binding"/>
    <property type="evidence" value="ECO:0007669"/>
    <property type="project" value="TreeGrafter"/>
</dbReference>
<dbReference type="GO" id="GO:0060070">
    <property type="term" value="P:canonical Wnt signaling pathway"/>
    <property type="evidence" value="ECO:0007669"/>
    <property type="project" value="TreeGrafter"/>
</dbReference>
<dbReference type="GO" id="GO:0045165">
    <property type="term" value="P:cell fate commitment"/>
    <property type="evidence" value="ECO:0007669"/>
    <property type="project" value="TreeGrafter"/>
</dbReference>
<dbReference type="GO" id="GO:0030182">
    <property type="term" value="P:neuron differentiation"/>
    <property type="evidence" value="ECO:0007669"/>
    <property type="project" value="TreeGrafter"/>
</dbReference>
<dbReference type="Gene3D" id="3.30.2460.20">
    <property type="match status" value="1"/>
</dbReference>
<dbReference type="InterPro" id="IPR005817">
    <property type="entry name" value="Wnt"/>
</dbReference>
<dbReference type="InterPro" id="IPR043158">
    <property type="entry name" value="Wnt_C"/>
</dbReference>
<dbReference type="PANTHER" id="PTHR12027:SF91">
    <property type="entry name" value="PROTO-ONCOGENE WNT-1"/>
    <property type="match status" value="1"/>
</dbReference>
<dbReference type="PANTHER" id="PTHR12027">
    <property type="entry name" value="WNT RELATED"/>
    <property type="match status" value="1"/>
</dbReference>
<dbReference type="Pfam" id="PF00110">
    <property type="entry name" value="wnt"/>
    <property type="match status" value="1"/>
</dbReference>
<dbReference type="SMART" id="SM00097">
    <property type="entry name" value="WNT1"/>
    <property type="match status" value="1"/>
</dbReference>
<reference key="1">
    <citation type="journal article" date="1992" name="Proc. Natl. Acad. Sci. U.S.A.">
        <title>Diversification of the Wnt gene family on the ancestral lineage of vertebrates.</title>
        <authorList>
            <person name="Sidow A."/>
        </authorList>
    </citation>
    <scope>NUCLEOTIDE SEQUENCE [GENOMIC DNA]</scope>
</reference>
<protein>
    <recommendedName>
        <fullName>Protein Wnt-1</fullName>
    </recommendedName>
</protein>
<gene>
    <name type="primary">WNT-1</name>
</gene>
<organism>
    <name type="scientific">Evasterias troschelii</name>
    <name type="common">Mottled sea star</name>
    <name type="synonym">Asterias troschelii</name>
    <dbReference type="NCBI Taxonomy" id="7616"/>
    <lineage>
        <taxon>Eukaryota</taxon>
        <taxon>Metazoa</taxon>
        <taxon>Echinodermata</taxon>
        <taxon>Eleutherozoa</taxon>
        <taxon>Asterozoa</taxon>
        <taxon>Asteroidea</taxon>
        <taxon>Forcipulatacea</taxon>
        <taxon>Forcipulatida</taxon>
        <taxon>Asteriidae</taxon>
        <taxon>Evasterias</taxon>
    </lineage>
</organism>
<name>WNT1_EVATR</name>
<feature type="chain" id="PRO_0000200604" description="Protein Wnt-1">
    <location>
        <begin position="1" status="less than"/>
        <end position="143" status="greater than"/>
    </location>
</feature>
<feature type="region of interest" description="Disordered" evidence="6">
    <location>
        <begin position="38"/>
        <end position="81"/>
    </location>
</feature>
<feature type="compositionally biased region" description="Basic and acidic residues" evidence="6">
    <location>
        <begin position="46"/>
        <end position="60"/>
    </location>
</feature>
<feature type="compositionally biased region" description="Polar residues" evidence="6">
    <location>
        <begin position="64"/>
        <end position="75"/>
    </location>
</feature>
<feature type="lipid moiety-binding region" description="O-palmitoleoyl serine; by PORCN" evidence="4">
    <location>
        <position position="1"/>
    </location>
</feature>
<feature type="glycosylation site" description="N-linked (GlcNAc...) asparagine" evidence="5">
    <location>
        <position position="110"/>
    </location>
</feature>
<feature type="glycosylation site" description="N-linked (GlcNAc...) asparagine" evidence="5">
    <location>
        <position position="111"/>
    </location>
</feature>
<feature type="disulfide bond" evidence="2">
    <location>
        <begin position="109"/>
        <end position="124"/>
    </location>
</feature>
<feature type="non-terminal residue">
    <location>
        <position position="1"/>
    </location>
</feature>
<feature type="non-terminal residue">
    <location>
        <position position="143"/>
    </location>
</feature>
<comment type="function">
    <text evidence="4">Ligand for members of the frizzled family of seven transmembrane receptors. Probable developmental protein.</text>
</comment>
<comment type="subcellular location">
    <subcellularLocation>
        <location evidence="1">Secreted</location>
        <location evidence="1">Extracellular space</location>
        <location evidence="1">Extracellular matrix</location>
    </subcellularLocation>
    <subcellularLocation>
        <location evidence="1">Secreted</location>
    </subcellularLocation>
</comment>
<comment type="PTM">
    <text evidence="3 4">Palmitoleoylation is required for efficient binding to frizzled receptors. Palmitoleoylation is necessary for proper trafficking to cell surface (By similarity). Depalmitoleoylated by NOTUM, leading to inhibit Wnt signaling pathway (By similarity).</text>
</comment>
<comment type="similarity">
    <text evidence="7">Belongs to the Wnt family.</text>
</comment>
<proteinExistence type="inferred from homology"/>
<evidence type="ECO:0000250" key="1">
    <source>
        <dbReference type="UniProtKB" id="P04628"/>
    </source>
</evidence>
<evidence type="ECO:0000250" key="2">
    <source>
        <dbReference type="UniProtKB" id="P28026"/>
    </source>
</evidence>
<evidence type="ECO:0000250" key="3">
    <source>
        <dbReference type="UniProtKB" id="P56704"/>
    </source>
</evidence>
<evidence type="ECO:0000250" key="4">
    <source>
        <dbReference type="UniProtKB" id="Q91029"/>
    </source>
</evidence>
<evidence type="ECO:0000255" key="5"/>
<evidence type="ECO:0000256" key="6">
    <source>
        <dbReference type="SAM" id="MobiDB-lite"/>
    </source>
</evidence>
<evidence type="ECO:0000305" key="7"/>